<name>PGK_LEPBP</name>
<accession>B0SSU3</accession>
<gene>
    <name evidence="1" type="primary">pgk</name>
    <name type="ordered locus">LEPBI_I2081</name>
</gene>
<dbReference type="EC" id="2.7.2.3" evidence="1"/>
<dbReference type="EMBL" id="CP000786">
    <property type="protein sequence ID" value="ABZ98183.1"/>
    <property type="molecule type" value="Genomic_DNA"/>
</dbReference>
<dbReference type="RefSeq" id="WP_012389053.1">
    <property type="nucleotide sequence ID" value="NC_010602.1"/>
</dbReference>
<dbReference type="SMR" id="B0SSU3"/>
<dbReference type="STRING" id="456481.LEPBI_I2081"/>
<dbReference type="KEGG" id="lbi:LEPBI_I2081"/>
<dbReference type="HOGENOM" id="CLU_025427_0_2_12"/>
<dbReference type="OrthoDB" id="9808460at2"/>
<dbReference type="BioCyc" id="LBIF456481:LEPBI_RS10280-MONOMER"/>
<dbReference type="UniPathway" id="UPA00109">
    <property type="reaction ID" value="UER00185"/>
</dbReference>
<dbReference type="Proteomes" id="UP000001847">
    <property type="component" value="Chromosome I"/>
</dbReference>
<dbReference type="GO" id="GO:0005829">
    <property type="term" value="C:cytosol"/>
    <property type="evidence" value="ECO:0007669"/>
    <property type="project" value="TreeGrafter"/>
</dbReference>
<dbReference type="GO" id="GO:0043531">
    <property type="term" value="F:ADP binding"/>
    <property type="evidence" value="ECO:0007669"/>
    <property type="project" value="TreeGrafter"/>
</dbReference>
<dbReference type="GO" id="GO:0005524">
    <property type="term" value="F:ATP binding"/>
    <property type="evidence" value="ECO:0007669"/>
    <property type="project" value="UniProtKB-KW"/>
</dbReference>
<dbReference type="GO" id="GO:0004618">
    <property type="term" value="F:phosphoglycerate kinase activity"/>
    <property type="evidence" value="ECO:0007669"/>
    <property type="project" value="UniProtKB-UniRule"/>
</dbReference>
<dbReference type="GO" id="GO:0006094">
    <property type="term" value="P:gluconeogenesis"/>
    <property type="evidence" value="ECO:0007669"/>
    <property type="project" value="TreeGrafter"/>
</dbReference>
<dbReference type="GO" id="GO:0006096">
    <property type="term" value="P:glycolytic process"/>
    <property type="evidence" value="ECO:0007669"/>
    <property type="project" value="UniProtKB-UniRule"/>
</dbReference>
<dbReference type="CDD" id="cd00318">
    <property type="entry name" value="Phosphoglycerate_kinase"/>
    <property type="match status" value="1"/>
</dbReference>
<dbReference type="FunFam" id="3.40.50.1260:FF:000003">
    <property type="entry name" value="Phosphoglycerate kinase"/>
    <property type="match status" value="1"/>
</dbReference>
<dbReference type="FunFam" id="3.40.50.1260:FF:000006">
    <property type="entry name" value="Phosphoglycerate kinase"/>
    <property type="match status" value="1"/>
</dbReference>
<dbReference type="Gene3D" id="3.40.50.1260">
    <property type="entry name" value="Phosphoglycerate kinase, N-terminal domain"/>
    <property type="match status" value="2"/>
</dbReference>
<dbReference type="HAMAP" id="MF_00145">
    <property type="entry name" value="Phosphoglyc_kinase"/>
    <property type="match status" value="1"/>
</dbReference>
<dbReference type="InterPro" id="IPR001576">
    <property type="entry name" value="Phosphoglycerate_kinase"/>
</dbReference>
<dbReference type="InterPro" id="IPR015911">
    <property type="entry name" value="Phosphoglycerate_kinase_CS"/>
</dbReference>
<dbReference type="InterPro" id="IPR015824">
    <property type="entry name" value="Phosphoglycerate_kinase_N"/>
</dbReference>
<dbReference type="InterPro" id="IPR036043">
    <property type="entry name" value="Phosphoglycerate_kinase_sf"/>
</dbReference>
<dbReference type="PANTHER" id="PTHR11406">
    <property type="entry name" value="PHOSPHOGLYCERATE KINASE"/>
    <property type="match status" value="1"/>
</dbReference>
<dbReference type="PANTHER" id="PTHR11406:SF23">
    <property type="entry name" value="PHOSPHOGLYCERATE KINASE 1, CHLOROPLASTIC-RELATED"/>
    <property type="match status" value="1"/>
</dbReference>
<dbReference type="Pfam" id="PF00162">
    <property type="entry name" value="PGK"/>
    <property type="match status" value="1"/>
</dbReference>
<dbReference type="PIRSF" id="PIRSF000724">
    <property type="entry name" value="Pgk"/>
    <property type="match status" value="1"/>
</dbReference>
<dbReference type="PRINTS" id="PR00477">
    <property type="entry name" value="PHGLYCKINASE"/>
</dbReference>
<dbReference type="SUPFAM" id="SSF53748">
    <property type="entry name" value="Phosphoglycerate kinase"/>
    <property type="match status" value="1"/>
</dbReference>
<dbReference type="PROSITE" id="PS00111">
    <property type="entry name" value="PGLYCERATE_KINASE"/>
    <property type="match status" value="1"/>
</dbReference>
<evidence type="ECO:0000255" key="1">
    <source>
        <dbReference type="HAMAP-Rule" id="MF_00145"/>
    </source>
</evidence>
<feature type="chain" id="PRO_1000096354" description="Phosphoglycerate kinase">
    <location>
        <begin position="1"/>
        <end position="396"/>
    </location>
</feature>
<feature type="binding site" evidence="1">
    <location>
        <begin position="21"/>
        <end position="23"/>
    </location>
    <ligand>
        <name>substrate</name>
    </ligand>
</feature>
<feature type="binding site" evidence="1">
    <location>
        <position position="36"/>
    </location>
    <ligand>
        <name>substrate</name>
    </ligand>
</feature>
<feature type="binding site" evidence="1">
    <location>
        <begin position="59"/>
        <end position="62"/>
    </location>
    <ligand>
        <name>substrate</name>
    </ligand>
</feature>
<feature type="binding site" evidence="1">
    <location>
        <position position="118"/>
    </location>
    <ligand>
        <name>substrate</name>
    </ligand>
</feature>
<feature type="binding site" evidence="1">
    <location>
        <position position="151"/>
    </location>
    <ligand>
        <name>substrate</name>
    </ligand>
</feature>
<feature type="binding site" evidence="1">
    <location>
        <position position="201"/>
    </location>
    <ligand>
        <name>ATP</name>
        <dbReference type="ChEBI" id="CHEBI:30616"/>
    </ligand>
</feature>
<feature type="binding site" evidence="1">
    <location>
        <position position="292"/>
    </location>
    <ligand>
        <name>ATP</name>
        <dbReference type="ChEBI" id="CHEBI:30616"/>
    </ligand>
</feature>
<feature type="binding site" evidence="1">
    <location>
        <position position="323"/>
    </location>
    <ligand>
        <name>ATP</name>
        <dbReference type="ChEBI" id="CHEBI:30616"/>
    </ligand>
</feature>
<feature type="binding site" evidence="1">
    <location>
        <begin position="349"/>
        <end position="352"/>
    </location>
    <ligand>
        <name>ATP</name>
        <dbReference type="ChEBI" id="CHEBI:30616"/>
    </ligand>
</feature>
<reference key="1">
    <citation type="journal article" date="2008" name="PLoS ONE">
        <title>Genome sequence of the saprophyte Leptospira biflexa provides insights into the evolution of Leptospira and the pathogenesis of leptospirosis.</title>
        <authorList>
            <person name="Picardeau M."/>
            <person name="Bulach D.M."/>
            <person name="Bouchier C."/>
            <person name="Zuerner R.L."/>
            <person name="Zidane N."/>
            <person name="Wilson P.J."/>
            <person name="Creno S."/>
            <person name="Kuczek E.S."/>
            <person name="Bommezzadri S."/>
            <person name="Davis J.C."/>
            <person name="McGrath A."/>
            <person name="Johnson M.J."/>
            <person name="Boursaux-Eude C."/>
            <person name="Seemann T."/>
            <person name="Rouy Z."/>
            <person name="Coppel R.L."/>
            <person name="Rood J.I."/>
            <person name="Lajus A."/>
            <person name="Davies J.K."/>
            <person name="Medigue C."/>
            <person name="Adler B."/>
        </authorList>
    </citation>
    <scope>NUCLEOTIDE SEQUENCE [LARGE SCALE GENOMIC DNA]</scope>
    <source>
        <strain>Patoc 1 / ATCC 23582 / Paris</strain>
    </source>
</reference>
<protein>
    <recommendedName>
        <fullName evidence="1">Phosphoglycerate kinase</fullName>
        <ecNumber evidence="1">2.7.2.3</ecNumber>
    </recommendedName>
</protein>
<sequence length="396" mass="42739">MKLPLLEEQNLKGKRVFVRVDFNVPVENGKATDRTRIEKTLPTLELLISKGAKIILGSHLGRPKGGPEPKYSMKPVFDVLSELVKTKVSFSESVIGSDVVKMTNALGEGEILLLENLRFHKEEEENVASFCKELAKLADVYVNDAFGTAHRAHASTEGVAHLLPAFAGLLMRKEIEVLSGLLAKPERPFVAIVGGSKVSSKFAILKNLLEKVDHLLIGGGMAYTFLKSRAVPVGKSLVEPEFESQAFQLIDRAGIQGVDLQIPVDHIIADAFDPNAKTKSVDKMGIIDGWMGMDIGPKTIDNYVKAIKDAKTILWNGPMGVFEMDKFSKGTIEIAKAISKSKAKTVVGGGDSIAAVNKAGVADKITHISTGGGASLEFLEGRTLPGVQCLLPKEEK</sequence>
<proteinExistence type="inferred from homology"/>
<organism>
    <name type="scientific">Leptospira biflexa serovar Patoc (strain Patoc 1 / ATCC 23582 / Paris)</name>
    <dbReference type="NCBI Taxonomy" id="456481"/>
    <lineage>
        <taxon>Bacteria</taxon>
        <taxon>Pseudomonadati</taxon>
        <taxon>Spirochaetota</taxon>
        <taxon>Spirochaetia</taxon>
        <taxon>Leptospirales</taxon>
        <taxon>Leptospiraceae</taxon>
        <taxon>Leptospira</taxon>
    </lineage>
</organism>
<keyword id="KW-0067">ATP-binding</keyword>
<keyword id="KW-0963">Cytoplasm</keyword>
<keyword id="KW-0324">Glycolysis</keyword>
<keyword id="KW-0418">Kinase</keyword>
<keyword id="KW-0547">Nucleotide-binding</keyword>
<keyword id="KW-1185">Reference proteome</keyword>
<keyword id="KW-0808">Transferase</keyword>
<comment type="catalytic activity">
    <reaction evidence="1">
        <text>(2R)-3-phosphoglycerate + ATP = (2R)-3-phospho-glyceroyl phosphate + ADP</text>
        <dbReference type="Rhea" id="RHEA:14801"/>
        <dbReference type="ChEBI" id="CHEBI:30616"/>
        <dbReference type="ChEBI" id="CHEBI:57604"/>
        <dbReference type="ChEBI" id="CHEBI:58272"/>
        <dbReference type="ChEBI" id="CHEBI:456216"/>
        <dbReference type="EC" id="2.7.2.3"/>
    </reaction>
</comment>
<comment type="pathway">
    <text evidence="1">Carbohydrate degradation; glycolysis; pyruvate from D-glyceraldehyde 3-phosphate: step 2/5.</text>
</comment>
<comment type="subunit">
    <text evidence="1">Monomer.</text>
</comment>
<comment type="subcellular location">
    <subcellularLocation>
        <location evidence="1">Cytoplasm</location>
    </subcellularLocation>
</comment>
<comment type="similarity">
    <text evidence="1">Belongs to the phosphoglycerate kinase family.</text>
</comment>